<feature type="chain" id="PRO_0000071054" description="DnaJ homolog subfamily C member 5">
    <location>
        <begin position="1"/>
        <end position="198"/>
    </location>
</feature>
<feature type="domain" description="J" evidence="5">
    <location>
        <begin position="13"/>
        <end position="82"/>
    </location>
</feature>
<feature type="modified residue" description="Phosphoserine" evidence="12">
    <location>
        <position position="8"/>
    </location>
</feature>
<feature type="modified residue" description="Phosphoserine" evidence="6 12">
    <location>
        <position position="10"/>
    </location>
</feature>
<feature type="modified residue" description="Phosphoserine" evidence="12">
    <location>
        <position position="12"/>
    </location>
</feature>
<feature type="modified residue" description="Phosphoserine" evidence="12">
    <location>
        <position position="15"/>
    </location>
</feature>
<feature type="modified residue" description="Phosphotyrosine" evidence="4">
    <location>
        <position position="17"/>
    </location>
</feature>
<feature type="modified residue" description="N6-acetyllysine" evidence="4">
    <location>
        <position position="56"/>
    </location>
</feature>
<feature type="modified residue" description="Phosphoserine" evidence="12">
    <location>
        <position position="151"/>
    </location>
</feature>
<dbReference type="EMBL" id="U39320">
    <property type="protein sequence ID" value="AAA81372.1"/>
    <property type="molecule type" value="mRNA"/>
</dbReference>
<dbReference type="EMBL" id="S81917">
    <property type="protein sequence ID" value="AAB36303.1"/>
    <property type="molecule type" value="mRNA"/>
</dbReference>
<dbReference type="EMBL" id="AF323955">
    <property type="protein sequence ID" value="AAL04453.1"/>
    <property type="molecule type" value="mRNA"/>
</dbReference>
<dbReference type="PIR" id="I52655">
    <property type="entry name" value="I52655"/>
</dbReference>
<dbReference type="RefSeq" id="NP_001418362.1">
    <property type="nucleotide sequence ID" value="NM_001431433.1"/>
</dbReference>
<dbReference type="RefSeq" id="NP_001418363.1">
    <property type="nucleotide sequence ID" value="NM_001431434.1"/>
</dbReference>
<dbReference type="RefSeq" id="NP_001418364.1">
    <property type="nucleotide sequence ID" value="NM_001431435.1"/>
</dbReference>
<dbReference type="RefSeq" id="NP_077075.1">
    <property type="nucleotide sequence ID" value="NM_024161.4"/>
</dbReference>
<dbReference type="RefSeq" id="XP_008760766.1">
    <property type="nucleotide sequence ID" value="XM_008762544.2"/>
</dbReference>
<dbReference type="RefSeq" id="XP_008760767.1">
    <property type="nucleotide sequence ID" value="XM_008762545.2"/>
</dbReference>
<dbReference type="SMR" id="P60905"/>
<dbReference type="BioGRID" id="249414">
    <property type="interactions" value="2"/>
</dbReference>
<dbReference type="CORUM" id="P60905"/>
<dbReference type="FunCoup" id="P60905">
    <property type="interactions" value="3309"/>
</dbReference>
<dbReference type="STRING" id="10116.ENSRNOP00000020581"/>
<dbReference type="iPTMnet" id="P60905"/>
<dbReference type="PhosphoSitePlus" id="P60905"/>
<dbReference type="SwissPalm" id="P60905"/>
<dbReference type="jPOST" id="P60905"/>
<dbReference type="PaxDb" id="10116-ENSRNOP00000020581"/>
<dbReference type="Ensembl" id="ENSRNOT00000020581.4">
    <property type="protein sequence ID" value="ENSRNOP00000020581.1"/>
    <property type="gene ID" value="ENSRNOG00000015202.4"/>
</dbReference>
<dbReference type="GeneID" id="79130"/>
<dbReference type="KEGG" id="rno:79130"/>
<dbReference type="UCSC" id="RGD:620516">
    <property type="organism name" value="rat"/>
</dbReference>
<dbReference type="AGR" id="RGD:620516"/>
<dbReference type="CTD" id="80331"/>
<dbReference type="RGD" id="620516">
    <property type="gene designation" value="Dnajc5"/>
</dbReference>
<dbReference type="eggNOG" id="KOG0716">
    <property type="taxonomic scope" value="Eukaryota"/>
</dbReference>
<dbReference type="GeneTree" id="ENSGT00940000155597"/>
<dbReference type="InParanoid" id="P60905"/>
<dbReference type="OMA" id="CCLCCNF"/>
<dbReference type="OrthoDB" id="445556at2759"/>
<dbReference type="PhylomeDB" id="P60905"/>
<dbReference type="TreeFam" id="TF105164"/>
<dbReference type="Reactome" id="R-RNO-6798695">
    <property type="pathway name" value="Neutrophil degranulation"/>
</dbReference>
<dbReference type="Reactome" id="R-RNO-888590">
    <property type="pathway name" value="GABA synthesis, release, reuptake and degradation"/>
</dbReference>
<dbReference type="PRO" id="PR:P60905"/>
<dbReference type="Proteomes" id="UP000002494">
    <property type="component" value="Chromosome 3"/>
</dbReference>
<dbReference type="Bgee" id="ENSRNOG00000015202">
    <property type="expression patterns" value="Expressed in frontal cortex and 19 other cell types or tissues"/>
</dbReference>
<dbReference type="ExpressionAtlas" id="P60905">
    <property type="expression patterns" value="baseline and differential"/>
</dbReference>
<dbReference type="GO" id="GO:0042584">
    <property type="term" value="C:chromaffin granule membrane"/>
    <property type="evidence" value="ECO:0007669"/>
    <property type="project" value="UniProtKB-SubCell"/>
</dbReference>
<dbReference type="GO" id="GO:0005829">
    <property type="term" value="C:cytosol"/>
    <property type="evidence" value="ECO:0000250"/>
    <property type="project" value="UniProtKB"/>
</dbReference>
<dbReference type="GO" id="GO:0043231">
    <property type="term" value="C:intracellular membrane-bounded organelle"/>
    <property type="evidence" value="ECO:0000318"/>
    <property type="project" value="GO_Central"/>
</dbReference>
<dbReference type="GO" id="GO:0042470">
    <property type="term" value="C:melanosome"/>
    <property type="evidence" value="ECO:0007669"/>
    <property type="project" value="UniProtKB-SubCell"/>
</dbReference>
<dbReference type="GO" id="GO:0016020">
    <property type="term" value="C:membrane"/>
    <property type="evidence" value="ECO:0000250"/>
    <property type="project" value="UniProtKB"/>
</dbReference>
<dbReference type="GO" id="GO:0031594">
    <property type="term" value="C:neuromuscular junction"/>
    <property type="evidence" value="ECO:0000266"/>
    <property type="project" value="RGD"/>
</dbReference>
<dbReference type="GO" id="GO:0005886">
    <property type="term" value="C:plasma membrane"/>
    <property type="evidence" value="ECO:0000250"/>
    <property type="project" value="UniProtKB"/>
</dbReference>
<dbReference type="GO" id="GO:0098793">
    <property type="term" value="C:presynapse"/>
    <property type="evidence" value="ECO:0000266"/>
    <property type="project" value="RGD"/>
</dbReference>
<dbReference type="GO" id="GO:0008021">
    <property type="term" value="C:synaptic vesicle"/>
    <property type="evidence" value="ECO:0000266"/>
    <property type="project" value="RGD"/>
</dbReference>
<dbReference type="GO" id="GO:0030672">
    <property type="term" value="C:synaptic vesicle membrane"/>
    <property type="evidence" value="ECO:0000314"/>
    <property type="project" value="SynGO"/>
</dbReference>
<dbReference type="GO" id="GO:0043195">
    <property type="term" value="C:terminal bouton"/>
    <property type="evidence" value="ECO:0007005"/>
    <property type="project" value="ParkinsonsUK-UCL"/>
</dbReference>
<dbReference type="GO" id="GO:0043008">
    <property type="term" value="F:ATP-dependent protein binding"/>
    <property type="evidence" value="ECO:0000353"/>
    <property type="project" value="RGD"/>
</dbReference>
<dbReference type="GO" id="GO:0061077">
    <property type="term" value="P:chaperone-mediated protein folding"/>
    <property type="evidence" value="ECO:0000266"/>
    <property type="project" value="RGD"/>
</dbReference>
<dbReference type="GO" id="GO:0007268">
    <property type="term" value="P:chemical synaptic transmission"/>
    <property type="evidence" value="ECO:0000304"/>
    <property type="project" value="RGD"/>
</dbReference>
<dbReference type="GO" id="GO:0043524">
    <property type="term" value="P:negative regulation of neuron apoptotic process"/>
    <property type="evidence" value="ECO:0000266"/>
    <property type="project" value="RGD"/>
</dbReference>
<dbReference type="GO" id="GO:0051402">
    <property type="term" value="P:neuron apoptotic process"/>
    <property type="evidence" value="ECO:0000266"/>
    <property type="project" value="RGD"/>
</dbReference>
<dbReference type="GO" id="GO:0098693">
    <property type="term" value="P:regulation of synaptic vesicle cycle"/>
    <property type="evidence" value="ECO:0000266"/>
    <property type="project" value="RGD"/>
</dbReference>
<dbReference type="CDD" id="cd06257">
    <property type="entry name" value="DnaJ"/>
    <property type="match status" value="1"/>
</dbReference>
<dbReference type="FunFam" id="1.10.287.110:FF:000017">
    <property type="entry name" value="dnaJ homolog subfamily C member 5"/>
    <property type="match status" value="1"/>
</dbReference>
<dbReference type="Gene3D" id="1.10.287.110">
    <property type="entry name" value="DnaJ domain"/>
    <property type="match status" value="1"/>
</dbReference>
<dbReference type="InterPro" id="IPR051434">
    <property type="entry name" value="DnaJ_C_subfamily_member5"/>
</dbReference>
<dbReference type="InterPro" id="IPR001623">
    <property type="entry name" value="DnaJ_domain"/>
</dbReference>
<dbReference type="InterPro" id="IPR018253">
    <property type="entry name" value="DnaJ_domain_CS"/>
</dbReference>
<dbReference type="InterPro" id="IPR036869">
    <property type="entry name" value="J_dom_sf"/>
</dbReference>
<dbReference type="PANTHER" id="PTHR44027:SF1">
    <property type="entry name" value="DNAJ HOMOLOG SUBFAMILY C MEMBER 5"/>
    <property type="match status" value="1"/>
</dbReference>
<dbReference type="PANTHER" id="PTHR44027">
    <property type="entry name" value="DNAJ HOMOLOG SUBFAMILY C MEMBER 5 HOMOLOG"/>
    <property type="match status" value="1"/>
</dbReference>
<dbReference type="Pfam" id="PF00226">
    <property type="entry name" value="DnaJ"/>
    <property type="match status" value="1"/>
</dbReference>
<dbReference type="PRINTS" id="PR00625">
    <property type="entry name" value="JDOMAIN"/>
</dbReference>
<dbReference type="SMART" id="SM00271">
    <property type="entry name" value="DnaJ"/>
    <property type="match status" value="1"/>
</dbReference>
<dbReference type="SUPFAM" id="SSF46565">
    <property type="entry name" value="Chaperone J-domain"/>
    <property type="match status" value="1"/>
</dbReference>
<dbReference type="PROSITE" id="PS00636">
    <property type="entry name" value="DNAJ_1"/>
    <property type="match status" value="1"/>
</dbReference>
<dbReference type="PROSITE" id="PS50076">
    <property type="entry name" value="DNAJ_2"/>
    <property type="match status" value="1"/>
</dbReference>
<protein>
    <recommendedName>
        <fullName evidence="10">DnaJ homolog subfamily C member 5</fullName>
    </recommendedName>
    <alternativeName>
        <fullName evidence="9">Cysteine string protein</fullName>
        <shortName evidence="9">CSP</shortName>
    </alternativeName>
</protein>
<proteinExistence type="evidence at protein level"/>
<accession>P60905</accession>
<accession>P54101</accession>
<name>DNJC5_RAT</name>
<gene>
    <name evidence="11" type="primary">Dnajc5</name>
</gene>
<comment type="function">
    <text evidence="1 2 3">Acts as a general chaperone in regulated exocytosis (By similarity). Acts as a co-chaperone for the SNARE protein SNAP-25 (By similarity). Involved in the calcium-mediated control of a late stage of exocytosis (By similarity). May have an important role in presynaptic function. May be involved in calcium-dependent neurotransmitter release at nerve endings (By similarity).</text>
</comment>
<comment type="subunit">
    <text evidence="2 7 8">Homodimer (By similarity). Interacts with the chaperone complex consisting of HSC70 and SGTA (By similarity). Interacts with ZDHHC13 (via ANK repeats) (By similarity). Interacts with ZDHHC17 (via ANK repeats) (PubMed:25253725). Interacts with SYT1, SYT5 and SYT7, and with SYT9, forming a complex with SNAP25 (By similarity). Interacts with SYT1 in a phosphorylation-dependent manner (PubMed:11931641).</text>
</comment>
<comment type="subcellular location">
    <subcellularLocation>
        <location evidence="3">Cytoplasm</location>
        <location evidence="3">Cytosol</location>
    </subcellularLocation>
    <subcellularLocation>
        <location evidence="3">Membrane</location>
        <topology evidence="3">Lipid-anchor</topology>
    </subcellularLocation>
    <subcellularLocation>
        <location evidence="3">Cytoplasmic vesicle</location>
        <location evidence="3">Secretory vesicle</location>
        <location evidence="3">Chromaffin granule membrane</location>
    </subcellularLocation>
    <subcellularLocation>
        <location evidence="4">Melanosome</location>
    </subcellularLocation>
    <subcellularLocation>
        <location evidence="4">Cell membrane</location>
    </subcellularLocation>
    <text evidence="3">The association with membranes is regulated by palmitoylation.</text>
</comment>
<comment type="tissue specificity">
    <text>Brain. Predominantly associated with nerve endings and synaptic vesicles.</text>
</comment>
<comment type="PTM">
    <text evidence="4 6 7">Phosphorylated (PubMed:11931641). Phosphorylation results in a profound decrease in the affinity for syntaxin but has no effect on the affinity for HSC70 (PubMed:11604405, PubMed:11931641). Ser-10 phosphorylation induces an order-to-disorder transition triggering the interaction with Lys-58 (By similarity). This conformational switch modulates DNAJC5's cellular functions by reducing binding to syntaxin and synaptogamin without altering HSC70 interactions (By similarity).</text>
</comment>
<comment type="PTM">
    <text evidence="3">Palmitoylated. Could be palmitoylated by DHHC3, DHHC7, DHHC15 and DHHC17. Palmitoylation occurs probably in the cysteine-rich domain and regulates DNAJC5 membrane attachment.</text>
</comment>
<reference key="1">
    <citation type="journal article" date="1995" name="Brain Res. Mol. Brain Res.">
        <title>The nucleotide and deduced amino acid sequence of a rat cysteine string protein.</title>
        <authorList>
            <person name="Mastrogiacomo A."/>
            <person name="Gundersen C.B."/>
        </authorList>
    </citation>
    <scope>NUCLEOTIDE SEQUENCE [MRNA]</scope>
    <source>
        <strain>Sprague-Dawley</strain>
        <tissue>Brain</tissue>
    </source>
</reference>
<reference key="2">
    <citation type="journal article" date="1995" name="Neuropharmacology">
        <title>Cysteine string protein, a DnaJ family member, is present on diverse secretory vesicles.</title>
        <authorList>
            <person name="Braun J.E."/>
            <person name="Scheller R.H."/>
        </authorList>
    </citation>
    <scope>NUCLEOTIDE SEQUENCE [MRNA]</scope>
    <source>
        <tissue>Brain</tissue>
    </source>
</reference>
<reference key="3">
    <citation type="journal article" date="2001" name="Neurosci. Lett.">
        <title>Induction of cysteine string protein after chronic antidepressant treatment in rat frontal cortex.</title>
        <authorList>
            <person name="Yamada M."/>
            <person name="Yamada M."/>
            <person name="Yamazaki S."/>
            <person name="Takahashi K."/>
            <person name="Nara K."/>
            <person name="Ozawa H."/>
            <person name="Yamada S."/>
            <person name="Kiuchi Y."/>
            <person name="Oguchi K."/>
            <person name="Kamijima K."/>
            <person name="Higuchi T."/>
            <person name="Momose K."/>
        </authorList>
    </citation>
    <scope>NUCLEOTIDE SEQUENCE [MRNA]</scope>
    <source>
        <strain>Sprague-Dawley</strain>
        <tissue>Frontal cortex</tissue>
    </source>
</reference>
<reference key="4">
    <citation type="submission" date="2007-09" db="UniProtKB">
        <authorList>
            <person name="Lubec G."/>
            <person name="Kang S.U."/>
            <person name="Lubec S."/>
        </authorList>
    </citation>
    <scope>PROTEIN SEQUENCE OF 8-24 AND 42-73</scope>
    <scope>IDENTIFICATION BY MASS SPECTROMETRY</scope>
    <source>
        <strain>Sprague-Dawley</strain>
        <tissue>Brain</tissue>
    </source>
</reference>
<reference key="5">
    <citation type="journal article" date="2001" name="J. Biol. Chem.">
        <title>Phosphorylation of cysteine string protein by protein kinase A. Implications for the modulation of exocytosis.</title>
        <authorList>
            <person name="Evans G.J."/>
            <person name="Wilkinson M.C."/>
            <person name="Graham M.E."/>
            <person name="Turner K.M."/>
            <person name="Chamberlain L.H."/>
            <person name="Burgoyne R.D."/>
            <person name="Morgan A."/>
        </authorList>
    </citation>
    <scope>PROTEIN SEQUENCE OF 8-24</scope>
    <scope>PHOSPHORYLATION AT SER-10</scope>
</reference>
<reference key="6">
    <citation type="journal article" date="2002" name="Biochem. J.">
        <title>Phosphorylation-dependent interaction of the synaptic vesicle proteins cysteine string protein and synaptotagmin I.</title>
        <authorList>
            <person name="Evans G.J."/>
            <person name="Morgan A."/>
        </authorList>
    </citation>
    <scope>PHOSPHORYLATION</scope>
    <scope>INTERACTION WITH SYT1</scope>
</reference>
<reference key="7">
    <citation type="journal article" date="2012" name="Nat. Commun.">
        <title>Quantitative maps of protein phosphorylation sites across 14 different rat organs and tissues.</title>
        <authorList>
            <person name="Lundby A."/>
            <person name="Secher A."/>
            <person name="Lage K."/>
            <person name="Nordsborg N.B."/>
            <person name="Dmytriyev A."/>
            <person name="Lundby C."/>
            <person name="Olsen J.V."/>
        </authorList>
    </citation>
    <scope>PHOSPHORYLATION [LARGE SCALE ANALYSIS] AT SER-8; SER-10; SER-12; SER-15 AND SER-151</scope>
    <scope>IDENTIFICATION BY MASS SPECTROMETRY [LARGE SCALE ANALYSIS]</scope>
</reference>
<reference key="8">
    <citation type="journal article" date="2014" name="Mol. Biol. Cell">
        <title>The Golgi S-acylation machinery comprises zDHHC enzymes with major differences in substrate affinity and S-acylation activity.</title>
        <authorList>
            <person name="Lemonidis K."/>
            <person name="Gorleku O.A."/>
            <person name="Sanchez-Perez M.C."/>
            <person name="Grefen C."/>
            <person name="Chamberlain L.H."/>
        </authorList>
    </citation>
    <scope>INTERACTION WITH ZDHHC17</scope>
</reference>
<reference key="9">
    <citation type="journal article" date="2015" name="Semin. Cell Dev. Biol.">
        <title>Cysteine string protein (CSP) and its role in preventing neurodegeneration.</title>
        <authorList>
            <person name="Burgoyne R.D."/>
            <person name="Morgan A."/>
        </authorList>
    </citation>
    <scope>REVIEW</scope>
</reference>
<evidence type="ECO:0000250" key="1"/>
<evidence type="ECO:0000250" key="2">
    <source>
        <dbReference type="UniProtKB" id="P60904"/>
    </source>
</evidence>
<evidence type="ECO:0000250" key="3">
    <source>
        <dbReference type="UniProtKB" id="Q29455"/>
    </source>
</evidence>
<evidence type="ECO:0000250" key="4">
    <source>
        <dbReference type="UniProtKB" id="Q9H3Z4"/>
    </source>
</evidence>
<evidence type="ECO:0000255" key="5">
    <source>
        <dbReference type="PROSITE-ProRule" id="PRU00286"/>
    </source>
</evidence>
<evidence type="ECO:0000269" key="6">
    <source>
    </source>
</evidence>
<evidence type="ECO:0000269" key="7">
    <source>
    </source>
</evidence>
<evidence type="ECO:0000269" key="8">
    <source>
    </source>
</evidence>
<evidence type="ECO:0000303" key="9">
    <source>
    </source>
</evidence>
<evidence type="ECO:0000305" key="10"/>
<evidence type="ECO:0000312" key="11">
    <source>
        <dbReference type="RGD" id="620516"/>
    </source>
</evidence>
<evidence type="ECO:0007744" key="12">
    <source>
    </source>
</evidence>
<keyword id="KW-0007">Acetylation</keyword>
<keyword id="KW-1003">Cell membrane</keyword>
<keyword id="KW-0143">Chaperone</keyword>
<keyword id="KW-0963">Cytoplasm</keyword>
<keyword id="KW-0968">Cytoplasmic vesicle</keyword>
<keyword id="KW-0903">Direct protein sequencing</keyword>
<keyword id="KW-0449">Lipoprotein</keyword>
<keyword id="KW-0472">Membrane</keyword>
<keyword id="KW-0564">Palmitate</keyword>
<keyword id="KW-0597">Phosphoprotein</keyword>
<keyword id="KW-1185">Reference proteome</keyword>
<organism>
    <name type="scientific">Rattus norvegicus</name>
    <name type="common">Rat</name>
    <dbReference type="NCBI Taxonomy" id="10116"/>
    <lineage>
        <taxon>Eukaryota</taxon>
        <taxon>Metazoa</taxon>
        <taxon>Chordata</taxon>
        <taxon>Craniata</taxon>
        <taxon>Vertebrata</taxon>
        <taxon>Euteleostomi</taxon>
        <taxon>Mammalia</taxon>
        <taxon>Eutheria</taxon>
        <taxon>Euarchontoglires</taxon>
        <taxon>Glires</taxon>
        <taxon>Rodentia</taxon>
        <taxon>Myomorpha</taxon>
        <taxon>Muroidea</taxon>
        <taxon>Muridae</taxon>
        <taxon>Murinae</taxon>
        <taxon>Rattus</taxon>
    </lineage>
</organism>
<sequence>MADQRQRSLSTSGESLYHVLGLDKNATSDDIKKSYRKLALKYHPDKNPDNPEAADKFKEINNAHAILTDATKRNIYDKYGSLGLYVAEQFGEENVNTYFVLSSWWAKALFVVCGLLTCCYCCCCLCCCFNCCCGKCKPKAPEGEETEFYVSPEDLEAQLQSDEREATDTPIVIQPASATETTQLTADSHPSYHTDGFN</sequence>